<sequence length="370" mass="40236">MFMASTTSAVPWHLSQPTPAGNGSEGELLTARDPLLAQAELALLSTVFVAVALSNGLVLGALVRRGRRGRWAPMHVFIGHLCLADLAVALFQVLPQLAWDATDRFRGPDALCRAVKYLQMVGMYASSYMILAMTLDRHRAICRPMLAHRHGGGTHWNRPVLLAWAFSLLFSLPQLFIFAQRDVDGSGVLDCWARFAEPWGLRAYVTWIALMVFVAPALGIAACQVLIFREIHASLGPGPVPRAGGPRRGCRPGSPAEGARVSAAVAKTVKMTLVIVIVYVLCWAPFFLVQLWAAWDPEAPREGPPFVLLMLLASLNSCTNPWIYASFSSSISSELRSLLCCTWRRAPPSPGPQEESCATASSFLAKDTPS</sequence>
<reference key="1">
    <citation type="journal article" date="1995" name="FEBS Lett.">
        <title>An extracellular residue determines the agonist specificity of V2 vasopressin receptors.</title>
        <authorList>
            <person name="Ufer E."/>
            <person name="Postina R."/>
            <person name="Gorbulev V."/>
            <person name="Fahrenholz F."/>
        </authorList>
    </citation>
    <scope>NUCLEOTIDE SEQUENCE [MRNA]</scope>
    <scope>FUNCTION</scope>
    <scope>SUBCELLULAR LOCATION</scope>
    <source>
        <tissue>Kidney</tissue>
    </source>
</reference>
<reference key="2">
    <citation type="journal article" date="1993" name="Biochemistry">
        <title>Direct identification of an extracellular agonist binding site in the renal V2 vasopressin receptor.</title>
        <authorList>
            <person name="Kojro E."/>
            <person name="Eich P."/>
            <person name="Gimpl G."/>
            <person name="Fahrenholz F."/>
        </authorList>
    </citation>
    <scope>PROTEIN SEQUENCE OF 110-126</scope>
    <scope>AGONIST-BINDING SITE</scope>
    <scope>FUNCTION</scope>
    <scope>SUBCELLULAR LOCATION</scope>
    <source>
        <tissue>Kidney</tissue>
    </source>
</reference>
<protein>
    <recommendedName>
        <fullName>Vasopressin V2 receptor</fullName>
        <shortName>V2R</shortName>
    </recommendedName>
    <alternativeName>
        <fullName>AVPR V2</fullName>
    </alternativeName>
    <alternativeName>
        <fullName>Antidiuretic hormone receptor</fullName>
    </alternativeName>
    <alternativeName>
        <fullName>Renal-type arginine vasopressin receptor</fullName>
    </alternativeName>
</protein>
<keyword id="KW-1003">Cell membrane</keyword>
<keyword id="KW-0903">Direct protein sequencing</keyword>
<keyword id="KW-0297">G-protein coupled receptor</keyword>
<keyword id="KW-0325">Glycoprotein</keyword>
<keyword id="KW-0449">Lipoprotein</keyword>
<keyword id="KW-0472">Membrane</keyword>
<keyword id="KW-0564">Palmitate</keyword>
<keyword id="KW-0675">Receptor</keyword>
<keyword id="KW-1185">Reference proteome</keyword>
<keyword id="KW-0807">Transducer</keyword>
<keyword id="KW-0812">Transmembrane</keyword>
<keyword id="KW-1133">Transmembrane helix</keyword>
<proteinExistence type="evidence at protein level"/>
<dbReference type="EMBL" id="X83741">
    <property type="protein sequence ID" value="CAA58709.1"/>
    <property type="molecule type" value="mRNA"/>
</dbReference>
<dbReference type="PIR" id="S68777">
    <property type="entry name" value="S68777"/>
</dbReference>
<dbReference type="RefSeq" id="NP_776671.1">
    <property type="nucleotide sequence ID" value="NM_174246.2"/>
</dbReference>
<dbReference type="SMR" id="P48044"/>
<dbReference type="FunCoup" id="P48044">
    <property type="interactions" value="156"/>
</dbReference>
<dbReference type="STRING" id="9913.ENSBTAP00000055744"/>
<dbReference type="BindingDB" id="P48044"/>
<dbReference type="ChEMBL" id="CHEMBL2344"/>
<dbReference type="DrugCentral" id="P48044"/>
<dbReference type="GlyCosmos" id="P48044">
    <property type="glycosylation" value="1 site, No reported glycans"/>
</dbReference>
<dbReference type="GlyGen" id="P48044">
    <property type="glycosylation" value="1 site"/>
</dbReference>
<dbReference type="PaxDb" id="9913-ENSBTAP00000055744"/>
<dbReference type="GeneID" id="281642"/>
<dbReference type="KEGG" id="bta:281642"/>
<dbReference type="CTD" id="554"/>
<dbReference type="VEuPathDB" id="HostDB:ENSBTAG00000047138"/>
<dbReference type="eggNOG" id="KOG3656">
    <property type="taxonomic scope" value="Eukaryota"/>
</dbReference>
<dbReference type="HOGENOM" id="CLU_009579_15_3_1"/>
<dbReference type="InParanoid" id="P48044"/>
<dbReference type="OMA" id="FIATCQG"/>
<dbReference type="OrthoDB" id="5987909at2759"/>
<dbReference type="TreeFam" id="TF106499"/>
<dbReference type="Reactome" id="R-BTA-388479">
    <property type="pathway name" value="Vasopressin-like receptors"/>
</dbReference>
<dbReference type="Reactome" id="R-BTA-418555">
    <property type="pathway name" value="G alpha (s) signalling events"/>
</dbReference>
<dbReference type="Reactome" id="R-BTA-432040">
    <property type="pathway name" value="Vasopressin regulates renal water homeostasis via Aquaporins"/>
</dbReference>
<dbReference type="Reactome" id="R-BTA-8856825">
    <property type="pathway name" value="Cargo recognition for clathrin-mediated endocytosis"/>
</dbReference>
<dbReference type="Reactome" id="R-BTA-8856828">
    <property type="pathway name" value="Clathrin-mediated endocytosis"/>
</dbReference>
<dbReference type="PRO" id="PR:P48044"/>
<dbReference type="Proteomes" id="UP000009136">
    <property type="component" value="Chromosome X"/>
</dbReference>
<dbReference type="Bgee" id="ENSBTAG00000047138">
    <property type="expression patterns" value="Expressed in mammary gland fat and 54 other cell types or tissues"/>
</dbReference>
<dbReference type="GO" id="GO:0005886">
    <property type="term" value="C:plasma membrane"/>
    <property type="evidence" value="ECO:0000318"/>
    <property type="project" value="GO_Central"/>
</dbReference>
<dbReference type="GO" id="GO:0005000">
    <property type="term" value="F:vasopressin receptor activity"/>
    <property type="evidence" value="ECO:0000318"/>
    <property type="project" value="GO_Central"/>
</dbReference>
<dbReference type="GO" id="GO:0032870">
    <property type="term" value="P:cellular response to hormone stimulus"/>
    <property type="evidence" value="ECO:0000318"/>
    <property type="project" value="GO_Central"/>
</dbReference>
<dbReference type="GO" id="GO:0007186">
    <property type="term" value="P:G protein-coupled receptor signaling pathway"/>
    <property type="evidence" value="ECO:0000318"/>
    <property type="project" value="GO_Central"/>
</dbReference>
<dbReference type="GO" id="GO:0010628">
    <property type="term" value="P:positive regulation of gene expression"/>
    <property type="evidence" value="ECO:0000250"/>
    <property type="project" value="UniProtKB"/>
</dbReference>
<dbReference type="GO" id="GO:0045907">
    <property type="term" value="P:positive regulation of vasoconstriction"/>
    <property type="evidence" value="ECO:0000318"/>
    <property type="project" value="GO_Central"/>
</dbReference>
<dbReference type="GO" id="GO:0001992">
    <property type="term" value="P:regulation of systemic arterial blood pressure by vasopressin"/>
    <property type="evidence" value="ECO:0000318"/>
    <property type="project" value="GO_Central"/>
</dbReference>
<dbReference type="CDD" id="cd15388">
    <property type="entry name" value="7tmA_V2R"/>
    <property type="match status" value="1"/>
</dbReference>
<dbReference type="FunFam" id="1.20.1070.10:FF:000190">
    <property type="entry name" value="Vasopressin V2 receptor"/>
    <property type="match status" value="1"/>
</dbReference>
<dbReference type="Gene3D" id="1.20.1070.10">
    <property type="entry name" value="Rhodopsin 7-helix transmembrane proteins"/>
    <property type="match status" value="1"/>
</dbReference>
<dbReference type="InterPro" id="IPR000276">
    <property type="entry name" value="GPCR_Rhodpsn"/>
</dbReference>
<dbReference type="InterPro" id="IPR017452">
    <property type="entry name" value="GPCR_Rhodpsn_7TM"/>
</dbReference>
<dbReference type="InterPro" id="IPR001817">
    <property type="entry name" value="Vasoprsn_rcpt"/>
</dbReference>
<dbReference type="InterPro" id="IPR000161">
    <property type="entry name" value="Vprsn_rcpt_V2"/>
</dbReference>
<dbReference type="PANTHER" id="PTHR24241">
    <property type="entry name" value="NEUROPEPTIDE RECEPTOR-RELATED G-PROTEIN COUPLED RECEPTOR"/>
    <property type="match status" value="1"/>
</dbReference>
<dbReference type="PANTHER" id="PTHR24241:SF20">
    <property type="entry name" value="VASOPRESSIN V2 RECEPTOR"/>
    <property type="match status" value="1"/>
</dbReference>
<dbReference type="Pfam" id="PF00001">
    <property type="entry name" value="7tm_1"/>
    <property type="match status" value="1"/>
</dbReference>
<dbReference type="PRINTS" id="PR00237">
    <property type="entry name" value="GPCRRHODOPSN"/>
</dbReference>
<dbReference type="PRINTS" id="PR00896">
    <property type="entry name" value="VASOPRESSINR"/>
</dbReference>
<dbReference type="PRINTS" id="PR00898">
    <property type="entry name" value="VASOPRSNV2R"/>
</dbReference>
<dbReference type="SUPFAM" id="SSF81321">
    <property type="entry name" value="Family A G protein-coupled receptor-like"/>
    <property type="match status" value="1"/>
</dbReference>
<dbReference type="PROSITE" id="PS00237">
    <property type="entry name" value="G_PROTEIN_RECEP_F1_1"/>
    <property type="match status" value="1"/>
</dbReference>
<dbReference type="PROSITE" id="PS50262">
    <property type="entry name" value="G_PROTEIN_RECEP_F1_2"/>
    <property type="match status" value="1"/>
</dbReference>
<organism>
    <name type="scientific">Bos taurus</name>
    <name type="common">Bovine</name>
    <dbReference type="NCBI Taxonomy" id="9913"/>
    <lineage>
        <taxon>Eukaryota</taxon>
        <taxon>Metazoa</taxon>
        <taxon>Chordata</taxon>
        <taxon>Craniata</taxon>
        <taxon>Vertebrata</taxon>
        <taxon>Euteleostomi</taxon>
        <taxon>Mammalia</taxon>
        <taxon>Eutheria</taxon>
        <taxon>Laurasiatheria</taxon>
        <taxon>Artiodactyla</taxon>
        <taxon>Ruminantia</taxon>
        <taxon>Pecora</taxon>
        <taxon>Bovidae</taxon>
        <taxon>Bovinae</taxon>
        <taxon>Bos</taxon>
    </lineage>
</organism>
<name>V2R_BOVIN</name>
<comment type="function">
    <text evidence="2 6 7">Receptor for arginine vasopressin (PubMed:7698346, PubMed:8257689). The activity of this receptor is mediated by G proteins which activate adenylate cyclase. Involved in renal water reabsorption (By similarity).</text>
</comment>
<comment type="subunit">
    <text evidence="2">Interacts with ARRDC4 (By similarity). Identified in a complex containing at least ARRDC4, V2R and HGS (By similarity). Interacts with TMEM147 (By similarity).</text>
</comment>
<comment type="subcellular location">
    <subcellularLocation>
        <location evidence="6 7">Cell membrane</location>
        <topology evidence="2">Multi-pass membrane protein</topology>
    </subcellularLocation>
</comment>
<comment type="similarity">
    <text evidence="4">Belongs to the G-protein coupled receptor 1 family. Vasopressin/oxytocin receptor subfamily.</text>
</comment>
<evidence type="ECO:0000250" key="1"/>
<evidence type="ECO:0000250" key="2">
    <source>
        <dbReference type="UniProtKB" id="P30518"/>
    </source>
</evidence>
<evidence type="ECO:0000255" key="3"/>
<evidence type="ECO:0000255" key="4">
    <source>
        <dbReference type="PROSITE-ProRule" id="PRU00521"/>
    </source>
</evidence>
<evidence type="ECO:0000256" key="5">
    <source>
        <dbReference type="SAM" id="MobiDB-lite"/>
    </source>
</evidence>
<evidence type="ECO:0000269" key="6">
    <source>
    </source>
</evidence>
<evidence type="ECO:0000269" key="7">
    <source>
    </source>
</evidence>
<gene>
    <name type="primary">AVPR2</name>
</gene>
<feature type="chain" id="PRO_0000070206" description="Vasopressin V2 receptor">
    <location>
        <begin position="1"/>
        <end position="370"/>
    </location>
</feature>
<feature type="topological domain" description="Extracellular" evidence="3">
    <location>
        <begin position="1"/>
        <end position="38"/>
    </location>
</feature>
<feature type="transmembrane region" description="Helical; Name=1" evidence="3">
    <location>
        <begin position="39"/>
        <end position="63"/>
    </location>
</feature>
<feature type="topological domain" description="Cytoplasmic" evidence="3">
    <location>
        <begin position="64"/>
        <end position="77"/>
    </location>
</feature>
<feature type="transmembrane region" description="Helical; Name=2" evidence="3">
    <location>
        <begin position="78"/>
        <end position="98"/>
    </location>
</feature>
<feature type="topological domain" description="Extracellular" evidence="3">
    <location>
        <begin position="99"/>
        <end position="113"/>
    </location>
</feature>
<feature type="transmembrane region" description="Helical; Name=3" evidence="3">
    <location>
        <begin position="114"/>
        <end position="135"/>
    </location>
</feature>
<feature type="topological domain" description="Cytoplasmic" evidence="3">
    <location>
        <begin position="136"/>
        <end position="159"/>
    </location>
</feature>
<feature type="transmembrane region" description="Helical; Name=4" evidence="3">
    <location>
        <begin position="160"/>
        <end position="180"/>
    </location>
</feature>
<feature type="topological domain" description="Extracellular" evidence="3">
    <location>
        <begin position="181"/>
        <end position="199"/>
    </location>
</feature>
<feature type="transmembrane region" description="Helical; Name=5" evidence="3">
    <location>
        <begin position="200"/>
        <end position="219"/>
    </location>
</feature>
<feature type="topological domain" description="Cytoplasmic" evidence="3">
    <location>
        <begin position="220"/>
        <end position="270"/>
    </location>
</feature>
<feature type="transmembrane region" description="Helical; Name=6" evidence="3">
    <location>
        <begin position="271"/>
        <end position="292"/>
    </location>
</feature>
<feature type="topological domain" description="Extracellular" evidence="3">
    <location>
        <begin position="293"/>
        <end position="307"/>
    </location>
</feature>
<feature type="transmembrane region" description="Helical; Name=7" evidence="3">
    <location>
        <begin position="308"/>
        <end position="327"/>
    </location>
</feature>
<feature type="topological domain" description="Cytoplasmic" evidence="3">
    <location>
        <begin position="328"/>
        <end position="370"/>
    </location>
</feature>
<feature type="region of interest" description="Disordered" evidence="5">
    <location>
        <begin position="1"/>
        <end position="26"/>
    </location>
</feature>
<feature type="region of interest" description="Disordered" evidence="5">
    <location>
        <begin position="347"/>
        <end position="370"/>
    </location>
</feature>
<feature type="compositionally biased region" description="Polar residues" evidence="5">
    <location>
        <begin position="1"/>
        <end position="21"/>
    </location>
</feature>
<feature type="site" description="Implicated in agonist binding">
    <location>
        <position position="102"/>
    </location>
</feature>
<feature type="site" description="Implicated in agonist binding">
    <location>
        <position position="106"/>
    </location>
</feature>
<feature type="lipid moiety-binding region" description="S-palmitoyl cysteine" evidence="1">
    <location>
        <position position="340"/>
    </location>
</feature>
<feature type="lipid moiety-binding region" description="S-palmitoyl cysteine" evidence="1">
    <location>
        <position position="341"/>
    </location>
</feature>
<feature type="glycosylation site" description="N-linked (GlcNAc...) asparagine" evidence="3">
    <location>
        <position position="22"/>
    </location>
</feature>
<accession>P48044</accession>